<proteinExistence type="inferred from homology"/>
<accession>A5VP16</accession>
<reference key="1">
    <citation type="journal article" date="2009" name="PLoS ONE">
        <title>Genome degradation in Brucella ovis corresponds with narrowing of its host range and tissue tropism.</title>
        <authorList>
            <person name="Tsolis R.M."/>
            <person name="Seshadri R."/>
            <person name="Santos R.L."/>
            <person name="Sangari F.J."/>
            <person name="Lobo J.M."/>
            <person name="de Jong M.F."/>
            <person name="Ren Q."/>
            <person name="Myers G."/>
            <person name="Brinkac L.M."/>
            <person name="Nelson W.C."/>
            <person name="Deboy R.T."/>
            <person name="Angiuoli S."/>
            <person name="Khouri H."/>
            <person name="Dimitrov G."/>
            <person name="Robinson J.R."/>
            <person name="Mulligan S."/>
            <person name="Walker R.L."/>
            <person name="Elzer P.E."/>
            <person name="Hassan K.A."/>
            <person name="Paulsen I.T."/>
        </authorList>
    </citation>
    <scope>NUCLEOTIDE SEQUENCE [LARGE SCALE GENOMIC DNA]</scope>
    <source>
        <strain>ATCC 25840 / 63/290 / NCTC 10512</strain>
    </source>
</reference>
<keyword id="KW-1003">Cell membrane</keyword>
<keyword id="KW-0210">Decarboxylase</keyword>
<keyword id="KW-0444">Lipid biosynthesis</keyword>
<keyword id="KW-0443">Lipid metabolism</keyword>
<keyword id="KW-0456">Lyase</keyword>
<keyword id="KW-0472">Membrane</keyword>
<keyword id="KW-0594">Phospholipid biosynthesis</keyword>
<keyword id="KW-1208">Phospholipid metabolism</keyword>
<keyword id="KW-0670">Pyruvate</keyword>
<keyword id="KW-0865">Zymogen</keyword>
<evidence type="ECO:0000255" key="1">
    <source>
        <dbReference type="HAMAP-Rule" id="MF_00664"/>
    </source>
</evidence>
<dbReference type="EC" id="4.1.1.65" evidence="1"/>
<dbReference type="EMBL" id="CP000708">
    <property type="protein sequence ID" value="ABQ61762.1"/>
    <property type="molecule type" value="Genomic_DNA"/>
</dbReference>
<dbReference type="KEGG" id="bov:BOV_0450"/>
<dbReference type="HOGENOM" id="CLU_072492_0_0_5"/>
<dbReference type="PhylomeDB" id="A5VP16"/>
<dbReference type="UniPathway" id="UPA00558">
    <property type="reaction ID" value="UER00616"/>
</dbReference>
<dbReference type="Proteomes" id="UP000006383">
    <property type="component" value="Chromosome I"/>
</dbReference>
<dbReference type="GO" id="GO:0005886">
    <property type="term" value="C:plasma membrane"/>
    <property type="evidence" value="ECO:0007669"/>
    <property type="project" value="UniProtKB-SubCell"/>
</dbReference>
<dbReference type="GO" id="GO:0004609">
    <property type="term" value="F:phosphatidylserine decarboxylase activity"/>
    <property type="evidence" value="ECO:0007669"/>
    <property type="project" value="UniProtKB-UniRule"/>
</dbReference>
<dbReference type="GO" id="GO:0006646">
    <property type="term" value="P:phosphatidylethanolamine biosynthetic process"/>
    <property type="evidence" value="ECO:0007669"/>
    <property type="project" value="UniProtKB-UniRule"/>
</dbReference>
<dbReference type="HAMAP" id="MF_00664">
    <property type="entry name" value="PS_decarb_PSD_A"/>
    <property type="match status" value="1"/>
</dbReference>
<dbReference type="InterPro" id="IPR003817">
    <property type="entry name" value="PS_Dcarbxylase"/>
</dbReference>
<dbReference type="InterPro" id="IPR033175">
    <property type="entry name" value="PSD-A"/>
</dbReference>
<dbReference type="NCBIfam" id="NF003677">
    <property type="entry name" value="PRK05305.1-1"/>
    <property type="match status" value="1"/>
</dbReference>
<dbReference type="NCBIfam" id="NF003678">
    <property type="entry name" value="PRK05305.1-2"/>
    <property type="match status" value="1"/>
</dbReference>
<dbReference type="NCBIfam" id="NF003679">
    <property type="entry name" value="PRK05305.1-3"/>
    <property type="match status" value="1"/>
</dbReference>
<dbReference type="NCBIfam" id="NF003685">
    <property type="entry name" value="PRK05305.2-5"/>
    <property type="match status" value="1"/>
</dbReference>
<dbReference type="PANTHER" id="PTHR35809">
    <property type="entry name" value="ARCHAETIDYLSERINE DECARBOXYLASE PROENZYME-RELATED"/>
    <property type="match status" value="1"/>
</dbReference>
<dbReference type="PANTHER" id="PTHR35809:SF1">
    <property type="entry name" value="ARCHAETIDYLSERINE DECARBOXYLASE PROENZYME-RELATED"/>
    <property type="match status" value="1"/>
</dbReference>
<dbReference type="Pfam" id="PF02666">
    <property type="entry name" value="PS_Dcarbxylase"/>
    <property type="match status" value="1"/>
</dbReference>
<gene>
    <name evidence="1" type="primary">psd</name>
    <name type="ordered locus">BOV_0450</name>
</gene>
<organism>
    <name type="scientific">Brucella ovis (strain ATCC 25840 / 63/290 / NCTC 10512)</name>
    <dbReference type="NCBI Taxonomy" id="444178"/>
    <lineage>
        <taxon>Bacteria</taxon>
        <taxon>Pseudomonadati</taxon>
        <taxon>Pseudomonadota</taxon>
        <taxon>Alphaproteobacteria</taxon>
        <taxon>Hyphomicrobiales</taxon>
        <taxon>Brucellaceae</taxon>
        <taxon>Brucella/Ochrobactrum group</taxon>
        <taxon>Brucella</taxon>
    </lineage>
</organism>
<sequence>MSLTDTIRNTFVPIHREGYPFIAGFFVVSLILGWLWDPLFWIGMVLTVWCIYFYRDPERVTPMDDDLVISPADGKVSFVGLAVPPAELDLGYEPMTRVSVFMNVFSVHINRSPVRGKIDKVVHRPGKFLNAELDKASTENERNSVLIESPHGKVGVVQIAGLVARRIVCWSNQDDELSVGERFGLIRFGSRVDVYLPSDATVRVAVGQTAIAGETVLADYGTERGEPVVRIA</sequence>
<comment type="function">
    <text evidence="1">Catalyzes the formation of phosphatidylethanolamine (PtdEtn) from phosphatidylserine (PtdSer).</text>
</comment>
<comment type="catalytic activity">
    <reaction evidence="1">
        <text>a 1,2-diacyl-sn-glycero-3-phospho-L-serine + H(+) = a 1,2-diacyl-sn-glycero-3-phosphoethanolamine + CO2</text>
        <dbReference type="Rhea" id="RHEA:20828"/>
        <dbReference type="ChEBI" id="CHEBI:15378"/>
        <dbReference type="ChEBI" id="CHEBI:16526"/>
        <dbReference type="ChEBI" id="CHEBI:57262"/>
        <dbReference type="ChEBI" id="CHEBI:64612"/>
        <dbReference type="EC" id="4.1.1.65"/>
    </reaction>
</comment>
<comment type="cofactor">
    <cofactor evidence="1">
        <name>pyruvate</name>
        <dbReference type="ChEBI" id="CHEBI:15361"/>
    </cofactor>
    <text evidence="1">Binds 1 pyruvoyl group covalently per subunit.</text>
</comment>
<comment type="pathway">
    <text evidence="1">Phospholipid metabolism; phosphatidylethanolamine biosynthesis; phosphatidylethanolamine from CDP-diacylglycerol: step 2/2.</text>
</comment>
<comment type="subunit">
    <text evidence="1">Heterodimer of a large membrane-associated beta subunit and a small pyruvoyl-containing alpha subunit.</text>
</comment>
<comment type="subcellular location">
    <subcellularLocation>
        <location evidence="1">Cell membrane</location>
        <topology evidence="1">Peripheral membrane protein</topology>
    </subcellularLocation>
</comment>
<comment type="PTM">
    <text evidence="1">Is synthesized initially as an inactive proenzyme. Formation of the active enzyme involves a self-maturation process in which the active site pyruvoyl group is generated from an internal serine residue via an autocatalytic post-translational modification. Two non-identical subunits are generated from the proenzyme in this reaction, and the pyruvate is formed at the N-terminus of the alpha chain, which is derived from the carboxyl end of the proenzyme. The post-translation cleavage follows an unusual pathway, termed non-hydrolytic serinolysis, in which the side chain hydroxyl group of the serine supplies its oxygen atom to form the C-terminus of the beta chain, while the remainder of the serine residue undergoes an oxidative deamination to produce ammonia and the pyruvoyl prosthetic group on the alpha chain.</text>
</comment>
<comment type="similarity">
    <text evidence="1">Belongs to the phosphatidylserine decarboxylase family. PSD-A subfamily.</text>
</comment>
<name>PSD_BRUO2</name>
<protein>
    <recommendedName>
        <fullName evidence="1">Phosphatidylserine decarboxylase proenzyme</fullName>
        <ecNumber evidence="1">4.1.1.65</ecNumber>
    </recommendedName>
    <component>
        <recommendedName>
            <fullName evidence="1">Phosphatidylserine decarboxylase alpha chain</fullName>
        </recommendedName>
    </component>
    <component>
        <recommendedName>
            <fullName evidence="1">Phosphatidylserine decarboxylase beta chain</fullName>
        </recommendedName>
    </component>
</protein>
<feature type="chain" id="PRO_1000026630" description="Phosphatidylserine decarboxylase beta chain" evidence="1">
    <location>
        <begin position="1"/>
        <end position="189"/>
    </location>
</feature>
<feature type="chain" id="PRO_1000026631" description="Phosphatidylserine decarboxylase alpha chain" evidence="1">
    <location>
        <begin position="190"/>
        <end position="232"/>
    </location>
</feature>
<feature type="active site" description="Schiff-base intermediate with substrate; via pyruvic acid" evidence="1">
    <location>
        <position position="190"/>
    </location>
</feature>
<feature type="site" description="Cleavage (non-hydrolytic); by autocatalysis" evidence="1">
    <location>
        <begin position="189"/>
        <end position="190"/>
    </location>
</feature>
<feature type="modified residue" description="Pyruvic acid (Ser); by autocatalysis" evidence="1">
    <location>
        <position position="190"/>
    </location>
</feature>